<accession>A5F619</accession>
<accession>C3M3L5</accession>
<evidence type="ECO:0000255" key="1">
    <source>
        <dbReference type="HAMAP-Rule" id="MF_01220"/>
    </source>
</evidence>
<feature type="chain" id="PRO_1000073146" description="Uridylate kinase">
    <location>
        <begin position="1"/>
        <end position="243"/>
    </location>
</feature>
<feature type="region of interest" description="Involved in allosteric activation by GTP" evidence="1">
    <location>
        <begin position="23"/>
        <end position="28"/>
    </location>
</feature>
<feature type="binding site" evidence="1">
    <location>
        <begin position="15"/>
        <end position="18"/>
    </location>
    <ligand>
        <name>ATP</name>
        <dbReference type="ChEBI" id="CHEBI:30616"/>
    </ligand>
</feature>
<feature type="binding site" evidence="1">
    <location>
        <position position="57"/>
    </location>
    <ligand>
        <name>UMP</name>
        <dbReference type="ChEBI" id="CHEBI:57865"/>
    </ligand>
</feature>
<feature type="binding site" evidence="1">
    <location>
        <position position="58"/>
    </location>
    <ligand>
        <name>ATP</name>
        <dbReference type="ChEBI" id="CHEBI:30616"/>
    </ligand>
</feature>
<feature type="binding site" evidence="1">
    <location>
        <position position="62"/>
    </location>
    <ligand>
        <name>ATP</name>
        <dbReference type="ChEBI" id="CHEBI:30616"/>
    </ligand>
</feature>
<feature type="binding site" evidence="1">
    <location>
        <position position="77"/>
    </location>
    <ligand>
        <name>UMP</name>
        <dbReference type="ChEBI" id="CHEBI:57865"/>
    </ligand>
</feature>
<feature type="binding site" evidence="1">
    <location>
        <begin position="138"/>
        <end position="145"/>
    </location>
    <ligand>
        <name>UMP</name>
        <dbReference type="ChEBI" id="CHEBI:57865"/>
    </ligand>
</feature>
<feature type="binding site" evidence="1">
    <location>
        <position position="165"/>
    </location>
    <ligand>
        <name>ATP</name>
        <dbReference type="ChEBI" id="CHEBI:30616"/>
    </ligand>
</feature>
<feature type="binding site" evidence="1">
    <location>
        <position position="171"/>
    </location>
    <ligand>
        <name>ATP</name>
        <dbReference type="ChEBI" id="CHEBI:30616"/>
    </ligand>
</feature>
<feature type="binding site" evidence="1">
    <location>
        <position position="174"/>
    </location>
    <ligand>
        <name>ATP</name>
        <dbReference type="ChEBI" id="CHEBI:30616"/>
    </ligand>
</feature>
<name>PYRH_VIBC3</name>
<comment type="function">
    <text evidence="1">Catalyzes the reversible phosphorylation of UMP to UDP.</text>
</comment>
<comment type="catalytic activity">
    <reaction evidence="1">
        <text>UMP + ATP = UDP + ADP</text>
        <dbReference type="Rhea" id="RHEA:24400"/>
        <dbReference type="ChEBI" id="CHEBI:30616"/>
        <dbReference type="ChEBI" id="CHEBI:57865"/>
        <dbReference type="ChEBI" id="CHEBI:58223"/>
        <dbReference type="ChEBI" id="CHEBI:456216"/>
        <dbReference type="EC" id="2.7.4.22"/>
    </reaction>
</comment>
<comment type="activity regulation">
    <text evidence="1">Allosterically activated by GTP. Inhibited by UTP.</text>
</comment>
<comment type="pathway">
    <text evidence="1">Pyrimidine metabolism; CTP biosynthesis via de novo pathway; UDP from UMP (UMPK route): step 1/1.</text>
</comment>
<comment type="subunit">
    <text evidence="1">Homohexamer.</text>
</comment>
<comment type="subcellular location">
    <subcellularLocation>
        <location evidence="1">Cytoplasm</location>
    </subcellularLocation>
</comment>
<comment type="similarity">
    <text evidence="1">Belongs to the UMP kinase family.</text>
</comment>
<protein>
    <recommendedName>
        <fullName evidence="1">Uridylate kinase</fullName>
        <shortName evidence="1">UK</shortName>
        <ecNumber evidence="1">2.7.4.22</ecNumber>
    </recommendedName>
    <alternativeName>
        <fullName evidence="1">Uridine monophosphate kinase</fullName>
        <shortName evidence="1">UMP kinase</shortName>
        <shortName evidence="1">UMPK</shortName>
    </alternativeName>
</protein>
<organism>
    <name type="scientific">Vibrio cholerae serotype O1 (strain ATCC 39541 / Classical Ogawa 395 / O395)</name>
    <dbReference type="NCBI Taxonomy" id="345073"/>
    <lineage>
        <taxon>Bacteria</taxon>
        <taxon>Pseudomonadati</taxon>
        <taxon>Pseudomonadota</taxon>
        <taxon>Gammaproteobacteria</taxon>
        <taxon>Vibrionales</taxon>
        <taxon>Vibrionaceae</taxon>
        <taxon>Vibrio</taxon>
    </lineage>
</organism>
<sequence length="243" mass="26196">MTTNPKPAYQRILLKLSGEALQGSEGFGIDPTVLDRMAQEVKELVELGVQVGVVIGGGNLFRGAGLAKAGMNRVVGDHMGMLATVMNGLAMRDALHRAYVNARLMSAIPLNGVCDDYSWSDAIRELRQGRVVIFAAGTGNPFFTTDSAACLRGIEIEADVVLKATKVDGVYSADPVANPDAQLYDKLAYNDVLEKELKVMDLAAFTLARDHKMPIRVFNMNKPGALRRVVMGEAEGTLISDVQ</sequence>
<gene>
    <name evidence="1" type="primary">pyrH</name>
    <name type="ordered locus">VC0395_A1849</name>
    <name type="ordered locus">VC395_2374</name>
</gene>
<keyword id="KW-0021">Allosteric enzyme</keyword>
<keyword id="KW-0067">ATP-binding</keyword>
<keyword id="KW-0963">Cytoplasm</keyword>
<keyword id="KW-0418">Kinase</keyword>
<keyword id="KW-0547">Nucleotide-binding</keyword>
<keyword id="KW-0665">Pyrimidine biosynthesis</keyword>
<keyword id="KW-0808">Transferase</keyword>
<proteinExistence type="inferred from homology"/>
<reference key="1">
    <citation type="submission" date="2007-03" db="EMBL/GenBank/DDBJ databases">
        <authorList>
            <person name="Heidelberg J."/>
        </authorList>
    </citation>
    <scope>NUCLEOTIDE SEQUENCE [LARGE SCALE GENOMIC DNA]</scope>
    <source>
        <strain>ATCC 39541 / Classical Ogawa 395 / O395</strain>
    </source>
</reference>
<reference key="2">
    <citation type="journal article" date="2008" name="PLoS ONE">
        <title>A recalibrated molecular clock and independent origins for the cholera pandemic clones.</title>
        <authorList>
            <person name="Feng L."/>
            <person name="Reeves P.R."/>
            <person name="Lan R."/>
            <person name="Ren Y."/>
            <person name="Gao C."/>
            <person name="Zhou Z."/>
            <person name="Ren Y."/>
            <person name="Cheng J."/>
            <person name="Wang W."/>
            <person name="Wang J."/>
            <person name="Qian W."/>
            <person name="Li D."/>
            <person name="Wang L."/>
        </authorList>
    </citation>
    <scope>NUCLEOTIDE SEQUENCE [LARGE SCALE GENOMIC DNA]</scope>
    <source>
        <strain>ATCC 39541 / Classical Ogawa 395 / O395</strain>
    </source>
</reference>
<dbReference type="EC" id="2.7.4.22" evidence="1"/>
<dbReference type="EMBL" id="CP000627">
    <property type="protein sequence ID" value="ABQ21412.1"/>
    <property type="molecule type" value="Genomic_DNA"/>
</dbReference>
<dbReference type="EMBL" id="CP001235">
    <property type="protein sequence ID" value="ACP10364.1"/>
    <property type="molecule type" value="Genomic_DNA"/>
</dbReference>
<dbReference type="RefSeq" id="WP_000210548.1">
    <property type="nucleotide sequence ID" value="NZ_JAACZH010000008.1"/>
</dbReference>
<dbReference type="SMR" id="A5F619"/>
<dbReference type="GeneID" id="69719117"/>
<dbReference type="KEGG" id="vco:VC0395_A1849"/>
<dbReference type="KEGG" id="vcr:VC395_2374"/>
<dbReference type="PATRIC" id="fig|345073.21.peg.2289"/>
<dbReference type="eggNOG" id="COG0528">
    <property type="taxonomic scope" value="Bacteria"/>
</dbReference>
<dbReference type="HOGENOM" id="CLU_033861_0_0_6"/>
<dbReference type="OrthoDB" id="9807458at2"/>
<dbReference type="UniPathway" id="UPA00159">
    <property type="reaction ID" value="UER00275"/>
</dbReference>
<dbReference type="Proteomes" id="UP000000249">
    <property type="component" value="Chromosome 2"/>
</dbReference>
<dbReference type="GO" id="GO:0005829">
    <property type="term" value="C:cytosol"/>
    <property type="evidence" value="ECO:0007669"/>
    <property type="project" value="TreeGrafter"/>
</dbReference>
<dbReference type="GO" id="GO:0005524">
    <property type="term" value="F:ATP binding"/>
    <property type="evidence" value="ECO:0007669"/>
    <property type="project" value="UniProtKB-KW"/>
</dbReference>
<dbReference type="GO" id="GO:0033862">
    <property type="term" value="F:UMP kinase activity"/>
    <property type="evidence" value="ECO:0007669"/>
    <property type="project" value="UniProtKB-EC"/>
</dbReference>
<dbReference type="GO" id="GO:0044210">
    <property type="term" value="P:'de novo' CTP biosynthetic process"/>
    <property type="evidence" value="ECO:0007669"/>
    <property type="project" value="UniProtKB-UniRule"/>
</dbReference>
<dbReference type="GO" id="GO:0006225">
    <property type="term" value="P:UDP biosynthetic process"/>
    <property type="evidence" value="ECO:0007669"/>
    <property type="project" value="TreeGrafter"/>
</dbReference>
<dbReference type="CDD" id="cd04254">
    <property type="entry name" value="AAK_UMPK-PyrH-Ec"/>
    <property type="match status" value="1"/>
</dbReference>
<dbReference type="FunFam" id="3.40.1160.10:FF:000001">
    <property type="entry name" value="Uridylate kinase"/>
    <property type="match status" value="1"/>
</dbReference>
<dbReference type="Gene3D" id="3.40.1160.10">
    <property type="entry name" value="Acetylglutamate kinase-like"/>
    <property type="match status" value="1"/>
</dbReference>
<dbReference type="HAMAP" id="MF_01220_B">
    <property type="entry name" value="PyrH_B"/>
    <property type="match status" value="1"/>
</dbReference>
<dbReference type="InterPro" id="IPR036393">
    <property type="entry name" value="AceGlu_kinase-like_sf"/>
</dbReference>
<dbReference type="InterPro" id="IPR001048">
    <property type="entry name" value="Asp/Glu/Uridylate_kinase"/>
</dbReference>
<dbReference type="InterPro" id="IPR011817">
    <property type="entry name" value="Uridylate_kinase"/>
</dbReference>
<dbReference type="InterPro" id="IPR015963">
    <property type="entry name" value="Uridylate_kinase_bac"/>
</dbReference>
<dbReference type="NCBIfam" id="TIGR02075">
    <property type="entry name" value="pyrH_bact"/>
    <property type="match status" value="1"/>
</dbReference>
<dbReference type="PANTHER" id="PTHR42833">
    <property type="entry name" value="URIDYLATE KINASE"/>
    <property type="match status" value="1"/>
</dbReference>
<dbReference type="PANTHER" id="PTHR42833:SF4">
    <property type="entry name" value="URIDYLATE KINASE PUMPKIN, CHLOROPLASTIC"/>
    <property type="match status" value="1"/>
</dbReference>
<dbReference type="Pfam" id="PF00696">
    <property type="entry name" value="AA_kinase"/>
    <property type="match status" value="1"/>
</dbReference>
<dbReference type="PIRSF" id="PIRSF005650">
    <property type="entry name" value="Uridylate_kin"/>
    <property type="match status" value="1"/>
</dbReference>
<dbReference type="SUPFAM" id="SSF53633">
    <property type="entry name" value="Carbamate kinase-like"/>
    <property type="match status" value="1"/>
</dbReference>